<comment type="function">
    <text evidence="1">Capsid protein. Probably binds RNA and plays a role in packaging (By similarity).</text>
</comment>
<comment type="subcellular location">
    <subcellularLocation>
        <location evidence="4">Virion</location>
    </subcellularLocation>
</comment>
<comment type="domain">
    <text evidence="1">The N-terminal arginine-rich stretch does not seem to be the major RNA-binding region that allows formation of an infectious ribonucleoprotein complex.</text>
</comment>
<comment type="similarity">
    <text evidence="4">Belongs to the cucumovirus capsid protein family.</text>
</comment>
<protein>
    <recommendedName>
        <fullName>Capsid protein</fullName>
        <shortName>CP</shortName>
    </recommendedName>
    <alternativeName>
        <fullName>Coat protein</fullName>
    </alternativeName>
</protein>
<keyword id="KW-0002">3D-structure</keyword>
<keyword id="KW-0007">Acetylation</keyword>
<keyword id="KW-0167">Capsid protein</keyword>
<keyword id="KW-1015">Disulfide bond</keyword>
<keyword id="KW-1185">Reference proteome</keyword>
<keyword id="KW-0687">Ribonucleoprotein</keyword>
<keyword id="KW-0694">RNA-binding</keyword>
<keyword id="KW-1142">T=3 icosahedral capsid protein</keyword>
<keyword id="KW-0543">Viral nucleoprotein</keyword>
<keyword id="KW-0946">Virion</keyword>
<organismHost>
    <name type="scientific">Canna</name>
    <dbReference type="NCBI Taxonomy" id="4627"/>
</organismHost>
<organismHost>
    <name type="scientific">Chrysanthemum morifolium</name>
    <name type="common">Florist's daisy</name>
    <name type="synonym">Dendranthema grandiflorum</name>
    <dbReference type="NCBI Taxonomy" id="41568"/>
</organismHost>
<organismHost>
    <name type="scientific">Lilium</name>
    <dbReference type="NCBI Taxonomy" id="4688"/>
</organismHost>
<organismHost>
    <name type="scientific">Solanum lycopersicum</name>
    <name type="common">Tomato</name>
    <name type="synonym">Lycopersicon esculentum</name>
    <dbReference type="NCBI Taxonomy" id="4081"/>
</organismHost>
<evidence type="ECO:0000250" key="1"/>
<evidence type="ECO:0000256" key="2">
    <source>
        <dbReference type="SAM" id="MobiDB-lite"/>
    </source>
</evidence>
<evidence type="ECO:0000269" key="3">
    <source>
    </source>
</evidence>
<evidence type="ECO:0000305" key="4"/>
<evidence type="ECO:0007829" key="5">
    <source>
        <dbReference type="PDB" id="1LAJ"/>
    </source>
</evidence>
<name>CAPSD_TAV</name>
<sequence>MAQNGTGGGSRRPRRGRRNNNNNNSTARDKALLALTQQVNRLANIASSSAPSLQHPTFIASKKCRAGYTYTSLDVRPTRTEKDKSFGQRLIIPVPVSEYPKKKVSCVQVRLNPSPKFNSTIWVSLRRLDETTLLTSENVFKLFTDGLAAVLIYQHVPTGIQPNNKITFDMSNVGAEIGDMGKYALIVYSKDDVLEADEMVIHIDIEHQRIPSLQRSRCDSTRMHDVRRR</sequence>
<proteinExistence type="evidence at protein level"/>
<accession>P23627</accession>
<feature type="chain" id="PRO_0000083224" description="Capsid protein">
    <location>
        <begin position="1"/>
        <end position="229"/>
    </location>
</feature>
<feature type="region of interest" description="Disordered" evidence="2">
    <location>
        <begin position="1"/>
        <end position="28"/>
    </location>
</feature>
<feature type="compositionally biased region" description="Gly residues" evidence="2">
    <location>
        <begin position="1"/>
        <end position="10"/>
    </location>
</feature>
<feature type="modified residue" description="N-acetylmethionine; by host" evidence="1">
    <location>
        <position position="1"/>
    </location>
</feature>
<feature type="disulfide bond" evidence="3">
    <location>
        <begin position="64"/>
        <end position="106"/>
    </location>
</feature>
<feature type="helix" evidence="5">
    <location>
        <begin position="37"/>
        <end position="43"/>
    </location>
</feature>
<feature type="helix" evidence="5">
    <location>
        <begin position="45"/>
        <end position="49"/>
    </location>
</feature>
<feature type="strand" evidence="5">
    <location>
        <begin position="56"/>
        <end position="58"/>
    </location>
</feature>
<feature type="strand" evidence="5">
    <location>
        <begin position="64"/>
        <end position="69"/>
    </location>
</feature>
<feature type="strand" evidence="5">
    <location>
        <begin position="85"/>
        <end position="89"/>
    </location>
</feature>
<feature type="turn" evidence="5">
    <location>
        <begin position="94"/>
        <end position="98"/>
    </location>
</feature>
<feature type="strand" evidence="5">
    <location>
        <begin position="102"/>
        <end position="113"/>
    </location>
</feature>
<feature type="strand" evidence="5">
    <location>
        <begin position="121"/>
        <end position="126"/>
    </location>
</feature>
<feature type="helix" evidence="5">
    <location>
        <begin position="136"/>
        <end position="143"/>
    </location>
</feature>
<feature type="strand" evidence="5">
    <location>
        <begin position="145"/>
        <end position="147"/>
    </location>
</feature>
<feature type="strand" evidence="5">
    <location>
        <begin position="151"/>
        <end position="153"/>
    </location>
</feature>
<feature type="strand" evidence="5">
    <location>
        <begin position="157"/>
        <end position="160"/>
    </location>
</feature>
<feature type="strand" evidence="5">
    <location>
        <begin position="167"/>
        <end position="169"/>
    </location>
</feature>
<feature type="turn" evidence="5">
    <location>
        <begin position="171"/>
        <end position="173"/>
    </location>
</feature>
<feature type="helix" evidence="5">
    <location>
        <begin position="178"/>
        <end position="182"/>
    </location>
</feature>
<feature type="strand" evidence="5">
    <location>
        <begin position="184"/>
        <end position="192"/>
    </location>
</feature>
<feature type="strand" evidence="5">
    <location>
        <begin position="198"/>
        <end position="208"/>
    </location>
</feature>
<gene>
    <name type="ORF">ORF3b</name>
</gene>
<organism>
    <name type="scientific">Tomato aspermy virus</name>
    <name type="common">TAV</name>
    <dbReference type="NCBI Taxonomy" id="12315"/>
    <lineage>
        <taxon>Viruses</taxon>
        <taxon>Riboviria</taxon>
        <taxon>Orthornavirae</taxon>
        <taxon>Kitrinoviricota</taxon>
        <taxon>Alsuviricetes</taxon>
        <taxon>Martellivirales</taxon>
        <taxon>Bromoviridae</taxon>
        <taxon>Cucumovirus</taxon>
    </lineage>
</organism>
<dbReference type="EMBL" id="D01015">
    <property type="protein sequence ID" value="BAA00820.1"/>
    <property type="molecule type" value="Genomic_RNA"/>
</dbReference>
<dbReference type="PIR" id="B54334">
    <property type="entry name" value="JQ0928"/>
</dbReference>
<dbReference type="PDB" id="1LAJ">
    <property type="method" value="X-ray"/>
    <property type="resolution" value="3.40 A"/>
    <property type="chains" value="A/B/C=1-212"/>
</dbReference>
<dbReference type="PDBsum" id="1LAJ"/>
<dbReference type="SMR" id="P23627"/>
<dbReference type="EvolutionaryTrace" id="P23627"/>
<dbReference type="Proteomes" id="UP000007399">
    <property type="component" value="Genome"/>
</dbReference>
<dbReference type="GO" id="GO:1990904">
    <property type="term" value="C:ribonucleoprotein complex"/>
    <property type="evidence" value="ECO:0007669"/>
    <property type="project" value="UniProtKB-KW"/>
</dbReference>
<dbReference type="GO" id="GO:0039617">
    <property type="term" value="C:T=3 icosahedral viral capsid"/>
    <property type="evidence" value="ECO:0007669"/>
    <property type="project" value="UniProtKB-KW"/>
</dbReference>
<dbReference type="GO" id="GO:0019013">
    <property type="term" value="C:viral nucleocapsid"/>
    <property type="evidence" value="ECO:0007669"/>
    <property type="project" value="UniProtKB-KW"/>
</dbReference>
<dbReference type="GO" id="GO:0003723">
    <property type="term" value="F:RNA binding"/>
    <property type="evidence" value="ECO:0007669"/>
    <property type="project" value="UniProtKB-KW"/>
</dbReference>
<dbReference type="GO" id="GO:0005198">
    <property type="term" value="F:structural molecule activity"/>
    <property type="evidence" value="ECO:0007669"/>
    <property type="project" value="InterPro"/>
</dbReference>
<dbReference type="Gene3D" id="2.60.120.530">
    <property type="entry name" value="Cucumovirus coat protein, subunit A"/>
    <property type="match status" value="1"/>
</dbReference>
<dbReference type="InterPro" id="IPR000247">
    <property type="entry name" value="Cucumovirus_coat"/>
</dbReference>
<dbReference type="InterPro" id="IPR037137">
    <property type="entry name" value="Cucumovirus_coat_Asu_sf"/>
</dbReference>
<dbReference type="Pfam" id="PF00760">
    <property type="entry name" value="Cucumo_coat"/>
    <property type="match status" value="1"/>
</dbReference>
<dbReference type="PRINTS" id="PR00222">
    <property type="entry name" value="CUCUMOCOAT"/>
</dbReference>
<dbReference type="SUPFAM" id="SSF88633">
    <property type="entry name" value="Positive stranded ssRNA viruses"/>
    <property type="match status" value="1"/>
</dbReference>
<reference key="1">
    <citation type="journal article" date="1991" name="J. Gen. Virol.">
        <title>Tomato aspermy virus has an evolutionary relationship with other tripartite RNA plant viruses.</title>
        <authorList>
            <person name="O'Reilly D."/>
            <person name="Thomas C.J.R."/>
            <person name="Coutts R.H.A."/>
        </authorList>
    </citation>
    <scope>NUCLEOTIDE SEQUENCE [GENOMIC RNA]</scope>
    <source>
        <strain>Chrysanthemum isolate</strain>
    </source>
</reference>
<reference key="2">
    <citation type="journal article" date="1995" name="Proteins">
        <title>Preliminary X-ray diffraction analysis of crystals of tomato aspermy virus (TAV).</title>
        <authorList>
            <person name="Canady M.A."/>
            <person name="Leja C.A."/>
            <person name="Day J."/>
            <person name="McPherson A."/>
        </authorList>
    </citation>
    <scope>X-RAY CRYSTALLOGRAPHY (3.4 ANGSTROMS) OF 1-212</scope>
    <scope>DISULFIDE BOND</scope>
</reference>